<sequence>MPEDDVRNKFLDAGDSDDDAGHGSDSEDDFQKGGRNAKRRRVSDDEDSEADDFTDAEEEHDQDDAESKDAPAKDGQETTDGKEKKDGKKEKEKKSVLASDLPGMTKPLTKKNLIVTEEAIKKSGVVYISRVPPFMTPAKLRSLLEPYGKLNRIFLAPEDPVARRKRIRSGGNKKKMFTEGWIEFVKKKDAKKACELLNARPIGGKKGSYYRDDIWNLLYLKGFKWHNLTEQIAAENAERSSRMRAEISKTTKENKEFVRNVERAKVLQGIQAKKASKGSKAGGEGAAQVTESTIPSAAATTTTTTNDDKRRTFKQIPLAKKRKLDETQPEQVQRVLSKIF</sequence>
<feature type="chain" id="PRO_0000285376" description="Pre-rRNA-processing protein esf-2">
    <location>
        <begin position="1"/>
        <end position="340"/>
    </location>
</feature>
<feature type="domain" description="RRM" evidence="2">
    <location>
        <begin position="124"/>
        <end position="214"/>
    </location>
</feature>
<feature type="region of interest" description="Disordered" evidence="3">
    <location>
        <begin position="1"/>
        <end position="103"/>
    </location>
</feature>
<feature type="region of interest" description="Disordered" evidence="3">
    <location>
        <begin position="272"/>
        <end position="329"/>
    </location>
</feature>
<feature type="compositionally biased region" description="Basic and acidic residues" evidence="3">
    <location>
        <begin position="1"/>
        <end position="12"/>
    </location>
</feature>
<feature type="compositionally biased region" description="Basic and acidic residues" evidence="3">
    <location>
        <begin position="19"/>
        <end position="32"/>
    </location>
</feature>
<feature type="compositionally biased region" description="Acidic residues" evidence="3">
    <location>
        <begin position="44"/>
        <end position="64"/>
    </location>
</feature>
<feature type="compositionally biased region" description="Basic and acidic residues" evidence="3">
    <location>
        <begin position="65"/>
        <end position="95"/>
    </location>
</feature>
<dbReference type="EMBL" id="CM002239">
    <property type="protein sequence ID" value="EAA32781.1"/>
    <property type="molecule type" value="Genomic_DNA"/>
</dbReference>
<dbReference type="RefSeq" id="XP_962017.1">
    <property type="nucleotide sequence ID" value="XM_956924.2"/>
</dbReference>
<dbReference type="SMR" id="Q7S8W7"/>
<dbReference type="FunCoup" id="Q7S8W7">
    <property type="interactions" value="896"/>
</dbReference>
<dbReference type="STRING" id="367110.Q7S8W7"/>
<dbReference type="PaxDb" id="5141-EFNCRP00000004040"/>
<dbReference type="EnsemblFungi" id="EAA32781">
    <property type="protein sequence ID" value="EAA32781"/>
    <property type="gene ID" value="NCU08668"/>
</dbReference>
<dbReference type="GeneID" id="3878165"/>
<dbReference type="KEGG" id="ncr:NCU08668"/>
<dbReference type="VEuPathDB" id="FungiDB:NCU08668"/>
<dbReference type="HOGENOM" id="CLU_054086_0_1_1"/>
<dbReference type="InParanoid" id="Q7S8W7"/>
<dbReference type="OMA" id="TRKHNDF"/>
<dbReference type="OrthoDB" id="287393at2759"/>
<dbReference type="Proteomes" id="UP000001805">
    <property type="component" value="Chromosome 4, Linkage Group IV"/>
</dbReference>
<dbReference type="GO" id="GO:0005730">
    <property type="term" value="C:nucleolus"/>
    <property type="evidence" value="ECO:0000318"/>
    <property type="project" value="GO_Central"/>
</dbReference>
<dbReference type="GO" id="GO:0003723">
    <property type="term" value="F:RNA binding"/>
    <property type="evidence" value="ECO:0000318"/>
    <property type="project" value="GO_Central"/>
</dbReference>
<dbReference type="GO" id="GO:0000480">
    <property type="term" value="P:endonucleolytic cleavage in 5'-ETS of tricistronic rRNA transcript (SSU-rRNA, 5.8S rRNA, LSU-rRNA)"/>
    <property type="evidence" value="ECO:0000318"/>
    <property type="project" value="GO_Central"/>
</dbReference>
<dbReference type="GO" id="GO:0000447">
    <property type="term" value="P:endonucleolytic cleavage in ITS1 to separate SSU-rRNA from 5.8S rRNA and LSU-rRNA from tricistronic rRNA transcript (SSU-rRNA, 5.8S rRNA, LSU-rRNA)"/>
    <property type="evidence" value="ECO:0000318"/>
    <property type="project" value="GO_Central"/>
</dbReference>
<dbReference type="GO" id="GO:0000472">
    <property type="term" value="P:endonucleolytic cleavage to generate mature 5'-end of SSU-rRNA from (SSU-rRNA, 5.8S rRNA, LSU-rRNA)"/>
    <property type="evidence" value="ECO:0000318"/>
    <property type="project" value="GO_Central"/>
</dbReference>
<dbReference type="GO" id="GO:0034462">
    <property type="term" value="P:small-subunit processome assembly"/>
    <property type="evidence" value="ECO:0000318"/>
    <property type="project" value="GO_Central"/>
</dbReference>
<dbReference type="CDD" id="cd12263">
    <property type="entry name" value="RRM_ABT1_like"/>
    <property type="match status" value="1"/>
</dbReference>
<dbReference type="FunFam" id="3.30.70.330:FF:001147">
    <property type="entry name" value="Pre-rRNA-processing protein esf-2"/>
    <property type="match status" value="1"/>
</dbReference>
<dbReference type="Gene3D" id="3.30.70.330">
    <property type="match status" value="1"/>
</dbReference>
<dbReference type="InterPro" id="IPR039119">
    <property type="entry name" value="ABT1/Esf2"/>
</dbReference>
<dbReference type="InterPro" id="IPR034353">
    <property type="entry name" value="ABT1/ESF2_RRM"/>
</dbReference>
<dbReference type="InterPro" id="IPR012677">
    <property type="entry name" value="Nucleotide-bd_a/b_plait_sf"/>
</dbReference>
<dbReference type="InterPro" id="IPR035979">
    <property type="entry name" value="RBD_domain_sf"/>
</dbReference>
<dbReference type="InterPro" id="IPR000504">
    <property type="entry name" value="RRM_dom"/>
</dbReference>
<dbReference type="PANTHER" id="PTHR12311">
    <property type="entry name" value="ACTIVATOR OF BASAL TRANSCRIPTION 1"/>
    <property type="match status" value="1"/>
</dbReference>
<dbReference type="PANTHER" id="PTHR12311:SF7">
    <property type="entry name" value="ACTIVATOR OF BASAL TRANSCRIPTION 1"/>
    <property type="match status" value="1"/>
</dbReference>
<dbReference type="Pfam" id="PF00076">
    <property type="entry name" value="RRM_1"/>
    <property type="match status" value="1"/>
</dbReference>
<dbReference type="SMART" id="SM00360">
    <property type="entry name" value="RRM"/>
    <property type="match status" value="1"/>
</dbReference>
<dbReference type="SUPFAM" id="SSF54928">
    <property type="entry name" value="RNA-binding domain, RBD"/>
    <property type="match status" value="1"/>
</dbReference>
<dbReference type="PROSITE" id="PS50102">
    <property type="entry name" value="RRM"/>
    <property type="match status" value="1"/>
</dbReference>
<protein>
    <recommendedName>
        <fullName>Pre-rRNA-processing protein esf-2</fullName>
    </recommendedName>
    <alternativeName>
        <fullName>18S rRNA factor 2</fullName>
    </alternativeName>
</protein>
<keyword id="KW-0539">Nucleus</keyword>
<keyword id="KW-1185">Reference proteome</keyword>
<keyword id="KW-0690">Ribosome biogenesis</keyword>
<keyword id="KW-0694">RNA-binding</keyword>
<keyword id="KW-0698">rRNA processing</keyword>
<evidence type="ECO:0000250" key="1"/>
<evidence type="ECO:0000255" key="2">
    <source>
        <dbReference type="PROSITE-ProRule" id="PRU00176"/>
    </source>
</evidence>
<evidence type="ECO:0000256" key="3">
    <source>
        <dbReference type="SAM" id="MobiDB-lite"/>
    </source>
</evidence>
<evidence type="ECO:0000305" key="4"/>
<organism>
    <name type="scientific">Neurospora crassa (strain ATCC 24698 / 74-OR23-1A / CBS 708.71 / DSM 1257 / FGSC 987)</name>
    <dbReference type="NCBI Taxonomy" id="367110"/>
    <lineage>
        <taxon>Eukaryota</taxon>
        <taxon>Fungi</taxon>
        <taxon>Dikarya</taxon>
        <taxon>Ascomycota</taxon>
        <taxon>Pezizomycotina</taxon>
        <taxon>Sordariomycetes</taxon>
        <taxon>Sordariomycetidae</taxon>
        <taxon>Sordariales</taxon>
        <taxon>Sordariaceae</taxon>
        <taxon>Neurospora</taxon>
    </lineage>
</organism>
<reference key="1">
    <citation type="journal article" date="2003" name="Nature">
        <title>The genome sequence of the filamentous fungus Neurospora crassa.</title>
        <authorList>
            <person name="Galagan J.E."/>
            <person name="Calvo S.E."/>
            <person name="Borkovich K.A."/>
            <person name="Selker E.U."/>
            <person name="Read N.D."/>
            <person name="Jaffe D.B."/>
            <person name="FitzHugh W."/>
            <person name="Ma L.-J."/>
            <person name="Smirnov S."/>
            <person name="Purcell S."/>
            <person name="Rehman B."/>
            <person name="Elkins T."/>
            <person name="Engels R."/>
            <person name="Wang S."/>
            <person name="Nielsen C.B."/>
            <person name="Butler J."/>
            <person name="Endrizzi M."/>
            <person name="Qui D."/>
            <person name="Ianakiev P."/>
            <person name="Bell-Pedersen D."/>
            <person name="Nelson M.A."/>
            <person name="Werner-Washburne M."/>
            <person name="Selitrennikoff C.P."/>
            <person name="Kinsey J.A."/>
            <person name="Braun E.L."/>
            <person name="Zelter A."/>
            <person name="Schulte U."/>
            <person name="Kothe G.O."/>
            <person name="Jedd G."/>
            <person name="Mewes H.-W."/>
            <person name="Staben C."/>
            <person name="Marcotte E."/>
            <person name="Greenberg D."/>
            <person name="Roy A."/>
            <person name="Foley K."/>
            <person name="Naylor J."/>
            <person name="Stange-Thomann N."/>
            <person name="Barrett R."/>
            <person name="Gnerre S."/>
            <person name="Kamal M."/>
            <person name="Kamvysselis M."/>
            <person name="Mauceli E.W."/>
            <person name="Bielke C."/>
            <person name="Rudd S."/>
            <person name="Frishman D."/>
            <person name="Krystofova S."/>
            <person name="Rasmussen C."/>
            <person name="Metzenberg R.L."/>
            <person name="Perkins D.D."/>
            <person name="Kroken S."/>
            <person name="Cogoni C."/>
            <person name="Macino G."/>
            <person name="Catcheside D.E.A."/>
            <person name="Li W."/>
            <person name="Pratt R.J."/>
            <person name="Osmani S.A."/>
            <person name="DeSouza C.P.C."/>
            <person name="Glass N.L."/>
            <person name="Orbach M.J."/>
            <person name="Berglund J.A."/>
            <person name="Voelker R."/>
            <person name="Yarden O."/>
            <person name="Plamann M."/>
            <person name="Seiler S."/>
            <person name="Dunlap J.C."/>
            <person name="Radford A."/>
            <person name="Aramayo R."/>
            <person name="Natvig D.O."/>
            <person name="Alex L.A."/>
            <person name="Mannhaupt G."/>
            <person name="Ebbole D.J."/>
            <person name="Freitag M."/>
            <person name="Paulsen I."/>
            <person name="Sachs M.S."/>
            <person name="Lander E.S."/>
            <person name="Nusbaum C."/>
            <person name="Birren B.W."/>
        </authorList>
    </citation>
    <scope>NUCLEOTIDE SEQUENCE [LARGE SCALE GENOMIC DNA]</scope>
    <source>
        <strain>ATCC 24698 / 74-OR23-1A / CBS 708.71 / DSM 1257 / FGSC 987</strain>
    </source>
</reference>
<name>ESF2_NEUCR</name>
<proteinExistence type="inferred from homology"/>
<gene>
    <name type="primary">esf-2</name>
    <name type="ORF">NCU08668</name>
</gene>
<comment type="function">
    <text evidence="1">Involved in the small subunit (SSU) processome assembly and function, and in the 18S rRNA synthesis. Required for the early cleavages at sites A0, A1 and A2 (By similarity).</text>
</comment>
<comment type="subcellular location">
    <subcellularLocation>
        <location evidence="1">Nucleus</location>
        <location evidence="1">Nucleolus</location>
    </subcellularLocation>
</comment>
<comment type="similarity">
    <text evidence="4">Belongs to the ESF2/ABP1 family.</text>
</comment>
<accession>Q7S8W7</accession>